<gene>
    <name evidence="1" type="primary">ulaD</name>
    <name type="ordered locus">SF4351</name>
    <name type="ordered locus">S4621</name>
</gene>
<comment type="function">
    <text evidence="1">Catalyzes the decarboxylation of 3-keto-L-gulonate-6-P into L-xylulose-5-P. Is involved in the anaerobic L-ascorbate utilization.</text>
</comment>
<comment type="catalytic activity">
    <reaction evidence="1">
        <text>3-dehydro-L-gulonate 6-phosphate + H(+) = L-xylulose 5-phosphate + CO2</text>
        <dbReference type="Rhea" id="RHEA:14353"/>
        <dbReference type="ChEBI" id="CHEBI:15378"/>
        <dbReference type="ChEBI" id="CHEBI:16526"/>
        <dbReference type="ChEBI" id="CHEBI:57829"/>
        <dbReference type="ChEBI" id="CHEBI:58774"/>
        <dbReference type="EC" id="4.1.1.85"/>
    </reaction>
</comment>
<comment type="cofactor">
    <cofactor evidence="1">
        <name>Mg(2+)</name>
        <dbReference type="ChEBI" id="CHEBI:18420"/>
    </cofactor>
    <text evidence="1">Binds 1 Mg(2+) ion per subunit.</text>
</comment>
<comment type="pathway">
    <text evidence="1">Cofactor degradation; L-ascorbate degradation; D-xylulose 5-phosphate from L-ascorbate: step 2/4.</text>
</comment>
<comment type="subunit">
    <text evidence="1">Homodimer.</text>
</comment>
<comment type="induction">
    <text evidence="1">Induced by L-ascorbate. Repressed by UlaR.</text>
</comment>
<comment type="similarity">
    <text evidence="1">Belongs to the HPS/KGPDC family. KGPDC subfamily.</text>
</comment>
<proteinExistence type="inferred from homology"/>
<reference key="1">
    <citation type="journal article" date="2002" name="Nucleic Acids Res.">
        <title>Genome sequence of Shigella flexneri 2a: insights into pathogenicity through comparison with genomes of Escherichia coli K12 and O157.</title>
        <authorList>
            <person name="Jin Q."/>
            <person name="Yuan Z."/>
            <person name="Xu J."/>
            <person name="Wang Y."/>
            <person name="Shen Y."/>
            <person name="Lu W."/>
            <person name="Wang J."/>
            <person name="Liu H."/>
            <person name="Yang J."/>
            <person name="Yang F."/>
            <person name="Zhang X."/>
            <person name="Zhang J."/>
            <person name="Yang G."/>
            <person name="Wu H."/>
            <person name="Qu D."/>
            <person name="Dong J."/>
            <person name="Sun L."/>
            <person name="Xue Y."/>
            <person name="Zhao A."/>
            <person name="Gao Y."/>
            <person name="Zhu J."/>
            <person name="Kan B."/>
            <person name="Ding K."/>
            <person name="Chen S."/>
            <person name="Cheng H."/>
            <person name="Yao Z."/>
            <person name="He B."/>
            <person name="Chen R."/>
            <person name="Ma D."/>
            <person name="Qiang B."/>
            <person name="Wen Y."/>
            <person name="Hou Y."/>
            <person name="Yu J."/>
        </authorList>
    </citation>
    <scope>NUCLEOTIDE SEQUENCE [LARGE SCALE GENOMIC DNA]</scope>
    <source>
        <strain>301 / Serotype 2a</strain>
    </source>
</reference>
<reference key="2">
    <citation type="journal article" date="2003" name="Infect. Immun.">
        <title>Complete genome sequence and comparative genomics of Shigella flexneri serotype 2a strain 2457T.</title>
        <authorList>
            <person name="Wei J."/>
            <person name="Goldberg M.B."/>
            <person name="Burland V."/>
            <person name="Venkatesan M.M."/>
            <person name="Deng W."/>
            <person name="Fournier G."/>
            <person name="Mayhew G.F."/>
            <person name="Plunkett G. III"/>
            <person name="Rose D.J."/>
            <person name="Darling A."/>
            <person name="Mau B."/>
            <person name="Perna N.T."/>
            <person name="Payne S.M."/>
            <person name="Runyen-Janecky L.J."/>
            <person name="Zhou S."/>
            <person name="Schwartz D.C."/>
            <person name="Blattner F.R."/>
        </authorList>
    </citation>
    <scope>NUCLEOTIDE SEQUENCE [LARGE SCALE GENOMIC DNA]</scope>
    <source>
        <strain>ATCC 700930 / 2457T / Serotype 2a</strain>
    </source>
</reference>
<name>ULAD_SHIFL</name>
<organism>
    <name type="scientific">Shigella flexneri</name>
    <dbReference type="NCBI Taxonomy" id="623"/>
    <lineage>
        <taxon>Bacteria</taxon>
        <taxon>Pseudomonadati</taxon>
        <taxon>Pseudomonadota</taxon>
        <taxon>Gammaproteobacteria</taxon>
        <taxon>Enterobacterales</taxon>
        <taxon>Enterobacteriaceae</taxon>
        <taxon>Shigella</taxon>
    </lineage>
</organism>
<sequence length="216" mass="23649">MSLPMLQVALDNQTMDSAYETTRLIAEEVDIIEVGTILCVGEGVRAVRDLKALYPHKIVLADAKIADAGKILSRMCFEANADWVTVICCADINTAKGALDVAKEFNGDVQIELTGYWTWEQAQQWRDAGIQQVVYHRSRDAQAAGVAWGEADITAIKRLSDMGFKVTVTGGLALEDLPLFKGIPIHVFIAGRSIRDAASPVEAARQFKRSIAELWG</sequence>
<protein>
    <recommendedName>
        <fullName evidence="1">3-keto-L-gulonate-6-phosphate decarboxylase UlaD</fullName>
        <ecNumber evidence="1">4.1.1.85</ecNumber>
    </recommendedName>
    <alternativeName>
        <fullName evidence="1">3-dehydro-L-gulonate-6-phosphate decarboxylase</fullName>
    </alternativeName>
    <alternativeName>
        <fullName evidence="1">KGPDC</fullName>
    </alternativeName>
    <alternativeName>
        <fullName evidence="1">L-ascorbate utilization protein D</fullName>
    </alternativeName>
</protein>
<keyword id="KW-0119">Carbohydrate metabolism</keyword>
<keyword id="KW-0210">Decarboxylase</keyword>
<keyword id="KW-0456">Lyase</keyword>
<keyword id="KW-0460">Magnesium</keyword>
<keyword id="KW-0479">Metal-binding</keyword>
<keyword id="KW-1185">Reference proteome</keyword>
<dbReference type="EC" id="4.1.1.85" evidence="1"/>
<dbReference type="EMBL" id="AE005674">
    <property type="protein sequence ID" value="AAN45768.2"/>
    <property type="molecule type" value="Genomic_DNA"/>
</dbReference>
<dbReference type="EMBL" id="AE014073">
    <property type="protein sequence ID" value="AAP19550.1"/>
    <property type="molecule type" value="Genomic_DNA"/>
</dbReference>
<dbReference type="RefSeq" id="NP_710061.2">
    <property type="nucleotide sequence ID" value="NC_004337.2"/>
</dbReference>
<dbReference type="RefSeq" id="WP_000056760.1">
    <property type="nucleotide sequence ID" value="NZ_WPGW01000113.1"/>
</dbReference>
<dbReference type="SMR" id="Q83P27"/>
<dbReference type="STRING" id="198214.SF4351"/>
<dbReference type="PaxDb" id="198214-SF4351"/>
<dbReference type="GeneID" id="1025414"/>
<dbReference type="GeneID" id="75202430"/>
<dbReference type="KEGG" id="sfl:SF4351"/>
<dbReference type="KEGG" id="sfx:S4621"/>
<dbReference type="PATRIC" id="fig|198214.7.peg.5130"/>
<dbReference type="HOGENOM" id="CLU_081825_0_0_6"/>
<dbReference type="UniPathway" id="UPA00263">
    <property type="reaction ID" value="UER00378"/>
</dbReference>
<dbReference type="Proteomes" id="UP000001006">
    <property type="component" value="Chromosome"/>
</dbReference>
<dbReference type="Proteomes" id="UP000002673">
    <property type="component" value="Chromosome"/>
</dbReference>
<dbReference type="GO" id="GO:0033982">
    <property type="term" value="F:3-dehydro-L-gulonate-6-phosphate decarboxylase activity"/>
    <property type="evidence" value="ECO:0007669"/>
    <property type="project" value="UniProtKB-EC"/>
</dbReference>
<dbReference type="GO" id="GO:0000287">
    <property type="term" value="F:magnesium ion binding"/>
    <property type="evidence" value="ECO:0007669"/>
    <property type="project" value="UniProtKB-UniRule"/>
</dbReference>
<dbReference type="GO" id="GO:0004590">
    <property type="term" value="F:orotidine-5'-phosphate decarboxylase activity"/>
    <property type="evidence" value="ECO:0007669"/>
    <property type="project" value="InterPro"/>
</dbReference>
<dbReference type="GO" id="GO:0006207">
    <property type="term" value="P:'de novo' pyrimidine nucleobase biosynthetic process"/>
    <property type="evidence" value="ECO:0007669"/>
    <property type="project" value="InterPro"/>
</dbReference>
<dbReference type="GO" id="GO:0019854">
    <property type="term" value="P:L-ascorbic acid catabolic process"/>
    <property type="evidence" value="ECO:0007669"/>
    <property type="project" value="UniProtKB-UniRule"/>
</dbReference>
<dbReference type="CDD" id="cd04726">
    <property type="entry name" value="KGPDC_HPS"/>
    <property type="match status" value="1"/>
</dbReference>
<dbReference type="FunFam" id="3.20.20.70:FF:000022">
    <property type="entry name" value="3-keto-L-gulonate-6-phosphate decarboxylase UlaD"/>
    <property type="match status" value="1"/>
</dbReference>
<dbReference type="Gene3D" id="3.20.20.70">
    <property type="entry name" value="Aldolase class I"/>
    <property type="match status" value="1"/>
</dbReference>
<dbReference type="HAMAP" id="MF_01267">
    <property type="entry name" value="UlaD"/>
    <property type="match status" value="1"/>
</dbReference>
<dbReference type="InterPro" id="IPR023942">
    <property type="entry name" value="3-keto-L-gulonate6Pdecase_UlaD"/>
</dbReference>
<dbReference type="InterPro" id="IPR013785">
    <property type="entry name" value="Aldolase_TIM"/>
</dbReference>
<dbReference type="InterPro" id="IPR041710">
    <property type="entry name" value="HPS/KGPDC"/>
</dbReference>
<dbReference type="InterPro" id="IPR001754">
    <property type="entry name" value="OMPdeCOase_dom"/>
</dbReference>
<dbReference type="InterPro" id="IPR011060">
    <property type="entry name" value="RibuloseP-bd_barrel"/>
</dbReference>
<dbReference type="NCBIfam" id="NF009832">
    <property type="entry name" value="PRK13306.1"/>
    <property type="match status" value="1"/>
</dbReference>
<dbReference type="PANTHER" id="PTHR35039">
    <property type="entry name" value="3-KETO-L-GULONATE-6-PHOSPHATE DECARBOXYLASE SGBH-RELATED"/>
    <property type="match status" value="1"/>
</dbReference>
<dbReference type="PANTHER" id="PTHR35039:SF3">
    <property type="entry name" value="3-KETO-L-GULONATE-6-PHOSPHATE DECARBOXYLASE SGBH-RELATED"/>
    <property type="match status" value="1"/>
</dbReference>
<dbReference type="Pfam" id="PF00215">
    <property type="entry name" value="OMPdecase"/>
    <property type="match status" value="1"/>
</dbReference>
<dbReference type="SMART" id="SM00934">
    <property type="entry name" value="OMPdecase"/>
    <property type="match status" value="1"/>
</dbReference>
<dbReference type="SUPFAM" id="SSF51366">
    <property type="entry name" value="Ribulose-phoshate binding barrel"/>
    <property type="match status" value="1"/>
</dbReference>
<accession>Q83P27</accession>
<accession>Q7UAK6</accession>
<feature type="chain" id="PRO_0000236097" description="3-keto-L-gulonate-6-phosphate decarboxylase UlaD">
    <location>
        <begin position="1"/>
        <end position="216"/>
    </location>
</feature>
<feature type="binding site" evidence="1">
    <location>
        <position position="11"/>
    </location>
    <ligand>
        <name>substrate</name>
    </ligand>
</feature>
<feature type="binding site" evidence="1">
    <location>
        <position position="33"/>
    </location>
    <ligand>
        <name>Mg(2+)</name>
        <dbReference type="ChEBI" id="CHEBI:18420"/>
    </ligand>
</feature>
<feature type="binding site" evidence="1">
    <location>
        <position position="62"/>
    </location>
    <ligand>
        <name>Mg(2+)</name>
        <dbReference type="ChEBI" id="CHEBI:18420"/>
    </ligand>
</feature>
<feature type="binding site" evidence="1">
    <location>
        <position position="192"/>
    </location>
    <ligand>
        <name>substrate</name>
    </ligand>
</feature>
<feature type="site" description="Transition state stabilizer" evidence="1">
    <location>
        <position position="64"/>
    </location>
</feature>
<feature type="site" description="Transition state stabilizer" evidence="1">
    <location>
        <position position="67"/>
    </location>
</feature>
<evidence type="ECO:0000255" key="1">
    <source>
        <dbReference type="HAMAP-Rule" id="MF_01267"/>
    </source>
</evidence>